<evidence type="ECO:0000250" key="1"/>
<evidence type="ECO:0000305" key="2"/>
<accession>Q9V9L1</accession>
<gene>
    <name type="primary">Cyp6w1</name>
    <name type="ORF">CG8345</name>
</gene>
<organism>
    <name type="scientific">Drosophila melanogaster</name>
    <name type="common">Fruit fly</name>
    <dbReference type="NCBI Taxonomy" id="7227"/>
    <lineage>
        <taxon>Eukaryota</taxon>
        <taxon>Metazoa</taxon>
        <taxon>Ecdysozoa</taxon>
        <taxon>Arthropoda</taxon>
        <taxon>Hexapoda</taxon>
        <taxon>Insecta</taxon>
        <taxon>Pterygota</taxon>
        <taxon>Neoptera</taxon>
        <taxon>Endopterygota</taxon>
        <taxon>Diptera</taxon>
        <taxon>Brachycera</taxon>
        <taxon>Muscomorpha</taxon>
        <taxon>Ephydroidea</taxon>
        <taxon>Drosophilidae</taxon>
        <taxon>Drosophila</taxon>
        <taxon>Sophophora</taxon>
    </lineage>
</organism>
<keyword id="KW-0256">Endoplasmic reticulum</keyword>
<keyword id="KW-0349">Heme</keyword>
<keyword id="KW-0408">Iron</keyword>
<keyword id="KW-0472">Membrane</keyword>
<keyword id="KW-0479">Metal-binding</keyword>
<keyword id="KW-0492">Microsome</keyword>
<keyword id="KW-0503">Monooxygenase</keyword>
<keyword id="KW-0560">Oxidoreductase</keyword>
<keyword id="KW-1185">Reference proteome</keyword>
<sequence>MLLLLLLGSLTIVFYIWQRRTLSFWERHGVKYIRPFPVVGCTREFLTAKVPFFEQIQKFHEAPGFENEPFVGVYMTHRPALVIRDLELIKTVMIKKFQYFNNRVLQTDPHNDALGYKNLFFARSPGWRELRTKISPVFTSGKIKQMYPLMVKIGKNLQDSAERLGSGTEVQVKDLCSRFTTDLIATIAFGVEANALQDAKSEFFYHNRAIFSLTLSRGIDFAIIFMIPALASLARVKLFSRETTKFIRSSVNYVLKERERTGEKRNDLIDILLALKREAAANPGKMSKEVDLDYLVAQAAVFQTAGFETSASTMTMTLYELAKNEALQDRLRQEIVDFFGDEDHISYERIQEMPYLSQVVNETLRKYPIVGYIERECSQPAEGERFTLEPFHNMELPHGMSIYMSTVAVHRDPQYWPDPEKYDPERFNSSNRDNLNMDAYMPFGVGPRNCIGMRLGLLQSKLGLVHILRNHRFHTCDKTIKKIEWAPTSPVMASKRDIILRVEKVSGKKDFGQK</sequence>
<reference key="1">
    <citation type="journal article" date="2000" name="Science">
        <title>The genome sequence of Drosophila melanogaster.</title>
        <authorList>
            <person name="Adams M.D."/>
            <person name="Celniker S.E."/>
            <person name="Holt R.A."/>
            <person name="Evans C.A."/>
            <person name="Gocayne J.D."/>
            <person name="Amanatides P.G."/>
            <person name="Scherer S.E."/>
            <person name="Li P.W."/>
            <person name="Hoskins R.A."/>
            <person name="Galle R.F."/>
            <person name="George R.A."/>
            <person name="Lewis S.E."/>
            <person name="Richards S."/>
            <person name="Ashburner M."/>
            <person name="Henderson S.N."/>
            <person name="Sutton G.G."/>
            <person name="Wortman J.R."/>
            <person name="Yandell M.D."/>
            <person name="Zhang Q."/>
            <person name="Chen L.X."/>
            <person name="Brandon R.C."/>
            <person name="Rogers Y.-H.C."/>
            <person name="Blazej R.G."/>
            <person name="Champe M."/>
            <person name="Pfeiffer B.D."/>
            <person name="Wan K.H."/>
            <person name="Doyle C."/>
            <person name="Baxter E.G."/>
            <person name="Helt G."/>
            <person name="Nelson C.R."/>
            <person name="Miklos G.L.G."/>
            <person name="Abril J.F."/>
            <person name="Agbayani A."/>
            <person name="An H.-J."/>
            <person name="Andrews-Pfannkoch C."/>
            <person name="Baldwin D."/>
            <person name="Ballew R.M."/>
            <person name="Basu A."/>
            <person name="Baxendale J."/>
            <person name="Bayraktaroglu L."/>
            <person name="Beasley E.M."/>
            <person name="Beeson K.Y."/>
            <person name="Benos P.V."/>
            <person name="Berman B.P."/>
            <person name="Bhandari D."/>
            <person name="Bolshakov S."/>
            <person name="Borkova D."/>
            <person name="Botchan M.R."/>
            <person name="Bouck J."/>
            <person name="Brokstein P."/>
            <person name="Brottier P."/>
            <person name="Burtis K.C."/>
            <person name="Busam D.A."/>
            <person name="Butler H."/>
            <person name="Cadieu E."/>
            <person name="Center A."/>
            <person name="Chandra I."/>
            <person name="Cherry J.M."/>
            <person name="Cawley S."/>
            <person name="Dahlke C."/>
            <person name="Davenport L.B."/>
            <person name="Davies P."/>
            <person name="de Pablos B."/>
            <person name="Delcher A."/>
            <person name="Deng Z."/>
            <person name="Mays A.D."/>
            <person name="Dew I."/>
            <person name="Dietz S.M."/>
            <person name="Dodson K."/>
            <person name="Doup L.E."/>
            <person name="Downes M."/>
            <person name="Dugan-Rocha S."/>
            <person name="Dunkov B.C."/>
            <person name="Dunn P."/>
            <person name="Durbin K.J."/>
            <person name="Evangelista C.C."/>
            <person name="Ferraz C."/>
            <person name="Ferriera S."/>
            <person name="Fleischmann W."/>
            <person name="Fosler C."/>
            <person name="Gabrielian A.E."/>
            <person name="Garg N.S."/>
            <person name="Gelbart W.M."/>
            <person name="Glasser K."/>
            <person name="Glodek A."/>
            <person name="Gong F."/>
            <person name="Gorrell J.H."/>
            <person name="Gu Z."/>
            <person name="Guan P."/>
            <person name="Harris M."/>
            <person name="Harris N.L."/>
            <person name="Harvey D.A."/>
            <person name="Heiman T.J."/>
            <person name="Hernandez J.R."/>
            <person name="Houck J."/>
            <person name="Hostin D."/>
            <person name="Houston K.A."/>
            <person name="Howland T.J."/>
            <person name="Wei M.-H."/>
            <person name="Ibegwam C."/>
            <person name="Jalali M."/>
            <person name="Kalush F."/>
            <person name="Karpen G.H."/>
            <person name="Ke Z."/>
            <person name="Kennison J.A."/>
            <person name="Ketchum K.A."/>
            <person name="Kimmel B.E."/>
            <person name="Kodira C.D."/>
            <person name="Kraft C.L."/>
            <person name="Kravitz S."/>
            <person name="Kulp D."/>
            <person name="Lai Z."/>
            <person name="Lasko P."/>
            <person name="Lei Y."/>
            <person name="Levitsky A.A."/>
            <person name="Li J.H."/>
            <person name="Li Z."/>
            <person name="Liang Y."/>
            <person name="Lin X."/>
            <person name="Liu X."/>
            <person name="Mattei B."/>
            <person name="McIntosh T.C."/>
            <person name="McLeod M.P."/>
            <person name="McPherson D."/>
            <person name="Merkulov G."/>
            <person name="Milshina N.V."/>
            <person name="Mobarry C."/>
            <person name="Morris J."/>
            <person name="Moshrefi A."/>
            <person name="Mount S.M."/>
            <person name="Moy M."/>
            <person name="Murphy B."/>
            <person name="Murphy L."/>
            <person name="Muzny D.M."/>
            <person name="Nelson D.L."/>
            <person name="Nelson D.R."/>
            <person name="Nelson K.A."/>
            <person name="Nixon K."/>
            <person name="Nusskern D.R."/>
            <person name="Pacleb J.M."/>
            <person name="Palazzolo M."/>
            <person name="Pittman G.S."/>
            <person name="Pan S."/>
            <person name="Pollard J."/>
            <person name="Puri V."/>
            <person name="Reese M.G."/>
            <person name="Reinert K."/>
            <person name="Remington K."/>
            <person name="Saunders R.D.C."/>
            <person name="Scheeler F."/>
            <person name="Shen H."/>
            <person name="Shue B.C."/>
            <person name="Siden-Kiamos I."/>
            <person name="Simpson M."/>
            <person name="Skupski M.P."/>
            <person name="Smith T.J."/>
            <person name="Spier E."/>
            <person name="Spradling A.C."/>
            <person name="Stapleton M."/>
            <person name="Strong R."/>
            <person name="Sun E."/>
            <person name="Svirskas R."/>
            <person name="Tector C."/>
            <person name="Turner R."/>
            <person name="Venter E."/>
            <person name="Wang A.H."/>
            <person name="Wang X."/>
            <person name="Wang Z.-Y."/>
            <person name="Wassarman D.A."/>
            <person name="Weinstock G.M."/>
            <person name="Weissenbach J."/>
            <person name="Williams S.M."/>
            <person name="Woodage T."/>
            <person name="Worley K.C."/>
            <person name="Wu D."/>
            <person name="Yang S."/>
            <person name="Yao Q.A."/>
            <person name="Ye J."/>
            <person name="Yeh R.-F."/>
            <person name="Zaveri J.S."/>
            <person name="Zhan M."/>
            <person name="Zhang G."/>
            <person name="Zhao Q."/>
            <person name="Zheng L."/>
            <person name="Zheng X.H."/>
            <person name="Zhong F.N."/>
            <person name="Zhong W."/>
            <person name="Zhou X."/>
            <person name="Zhu S.C."/>
            <person name="Zhu X."/>
            <person name="Smith H.O."/>
            <person name="Gibbs R.A."/>
            <person name="Myers E.W."/>
            <person name="Rubin G.M."/>
            <person name="Venter J.C."/>
        </authorList>
    </citation>
    <scope>NUCLEOTIDE SEQUENCE [LARGE SCALE GENOMIC DNA]</scope>
    <source>
        <strain>Berkeley</strain>
    </source>
</reference>
<reference key="2">
    <citation type="journal article" date="2002" name="Genome Biol.">
        <title>Annotation of the Drosophila melanogaster euchromatic genome: a systematic review.</title>
        <authorList>
            <person name="Misra S."/>
            <person name="Crosby M.A."/>
            <person name="Mungall C.J."/>
            <person name="Matthews B.B."/>
            <person name="Campbell K.S."/>
            <person name="Hradecky P."/>
            <person name="Huang Y."/>
            <person name="Kaminker J.S."/>
            <person name="Millburn G.H."/>
            <person name="Prochnik S.E."/>
            <person name="Smith C.D."/>
            <person name="Tupy J.L."/>
            <person name="Whitfield E.J."/>
            <person name="Bayraktaroglu L."/>
            <person name="Berman B.P."/>
            <person name="Bettencourt B.R."/>
            <person name="Celniker S.E."/>
            <person name="de Grey A.D.N.J."/>
            <person name="Drysdale R.A."/>
            <person name="Harris N.L."/>
            <person name="Richter J."/>
            <person name="Russo S."/>
            <person name="Schroeder A.J."/>
            <person name="Shu S.Q."/>
            <person name="Stapleton M."/>
            <person name="Yamada C."/>
            <person name="Ashburner M."/>
            <person name="Gelbart W.M."/>
            <person name="Rubin G.M."/>
            <person name="Lewis S.E."/>
        </authorList>
    </citation>
    <scope>GENOME REANNOTATION</scope>
    <source>
        <strain>Berkeley</strain>
    </source>
</reference>
<reference key="3">
    <citation type="journal article" date="2002" name="Genome Biol.">
        <title>A Drosophila full-length cDNA resource.</title>
        <authorList>
            <person name="Stapleton M."/>
            <person name="Carlson J.W."/>
            <person name="Brokstein P."/>
            <person name="Yu C."/>
            <person name="Champe M."/>
            <person name="George R.A."/>
            <person name="Guarin H."/>
            <person name="Kronmiller B."/>
            <person name="Pacleb J.M."/>
            <person name="Park S."/>
            <person name="Wan K.H."/>
            <person name="Rubin G.M."/>
            <person name="Celniker S.E."/>
        </authorList>
    </citation>
    <scope>NUCLEOTIDE SEQUENCE [LARGE SCALE MRNA]</scope>
    <source>
        <strain>Berkeley</strain>
        <tissue>Head</tissue>
    </source>
</reference>
<name>CP6W1_DROME</name>
<protein>
    <recommendedName>
        <fullName>Probable cytochrome P450 6w1</fullName>
        <ecNumber>1.14.-.-</ecNumber>
    </recommendedName>
    <alternativeName>
        <fullName>CYPVIW1</fullName>
    </alternativeName>
</protein>
<proteinExistence type="evidence at transcript level"/>
<dbReference type="EC" id="1.14.-.-"/>
<dbReference type="EMBL" id="AE013599">
    <property type="protein sequence ID" value="AAF57277.1"/>
    <property type="molecule type" value="Genomic_DNA"/>
</dbReference>
<dbReference type="EMBL" id="AY069121">
    <property type="protein sequence ID" value="AAL39266.1"/>
    <property type="molecule type" value="mRNA"/>
</dbReference>
<dbReference type="RefSeq" id="NP_001286145.1">
    <property type="nucleotide sequence ID" value="NM_001299216.1"/>
</dbReference>
<dbReference type="RefSeq" id="NP_610206.1">
    <property type="nucleotide sequence ID" value="NM_136362.3"/>
</dbReference>
<dbReference type="SMR" id="Q9V9L1"/>
<dbReference type="BioGRID" id="61446">
    <property type="interactions" value="1"/>
</dbReference>
<dbReference type="FunCoup" id="Q9V9L1">
    <property type="interactions" value="10"/>
</dbReference>
<dbReference type="STRING" id="7227.FBpp0311596"/>
<dbReference type="PaxDb" id="7227-FBpp0085332"/>
<dbReference type="EnsemblMetazoa" id="FBtr0085987">
    <property type="protein sequence ID" value="FBpp0085332"/>
    <property type="gene ID" value="FBgn0033065"/>
</dbReference>
<dbReference type="EnsemblMetazoa" id="FBtr0345485">
    <property type="protein sequence ID" value="FBpp0311596"/>
    <property type="gene ID" value="FBgn0033065"/>
</dbReference>
<dbReference type="GeneID" id="35543"/>
<dbReference type="KEGG" id="dme:Dmel_CG8345"/>
<dbReference type="UCSC" id="CG8345-RA">
    <property type="organism name" value="d. melanogaster"/>
</dbReference>
<dbReference type="AGR" id="FB:FBgn0033065"/>
<dbReference type="CTD" id="35543"/>
<dbReference type="FlyBase" id="FBgn0033065">
    <property type="gene designation" value="Cyp6w1"/>
</dbReference>
<dbReference type="VEuPathDB" id="VectorBase:FBgn0033065"/>
<dbReference type="eggNOG" id="KOG0158">
    <property type="taxonomic scope" value="Eukaryota"/>
</dbReference>
<dbReference type="GeneTree" id="ENSGT00940000167661"/>
<dbReference type="HOGENOM" id="CLU_001570_5_2_1"/>
<dbReference type="InParanoid" id="Q9V9L1"/>
<dbReference type="OMA" id="WKRHGVK"/>
<dbReference type="OrthoDB" id="2789670at2759"/>
<dbReference type="PhylomeDB" id="Q9V9L1"/>
<dbReference type="BioGRID-ORCS" id="35543">
    <property type="hits" value="0 hits in 1 CRISPR screen"/>
</dbReference>
<dbReference type="ChiTaRS" id="Cyp6w1">
    <property type="organism name" value="fly"/>
</dbReference>
<dbReference type="GenomeRNAi" id="35543"/>
<dbReference type="PRO" id="PR:Q9V9L1"/>
<dbReference type="Proteomes" id="UP000000803">
    <property type="component" value="Chromosome 2R"/>
</dbReference>
<dbReference type="Bgee" id="FBgn0033065">
    <property type="expression patterns" value="Expressed in epithelial cell in antenna and 124 other cell types or tissues"/>
</dbReference>
<dbReference type="ExpressionAtlas" id="Q9V9L1">
    <property type="expression patterns" value="baseline and differential"/>
</dbReference>
<dbReference type="GO" id="GO:0005789">
    <property type="term" value="C:endoplasmic reticulum membrane"/>
    <property type="evidence" value="ECO:0007669"/>
    <property type="project" value="UniProtKB-SubCell"/>
</dbReference>
<dbReference type="GO" id="GO:0020037">
    <property type="term" value="F:heme binding"/>
    <property type="evidence" value="ECO:0007669"/>
    <property type="project" value="InterPro"/>
</dbReference>
<dbReference type="GO" id="GO:0005506">
    <property type="term" value="F:iron ion binding"/>
    <property type="evidence" value="ECO:0007669"/>
    <property type="project" value="InterPro"/>
</dbReference>
<dbReference type="GO" id="GO:0004497">
    <property type="term" value="F:monooxygenase activity"/>
    <property type="evidence" value="ECO:0007669"/>
    <property type="project" value="UniProtKB-KW"/>
</dbReference>
<dbReference type="GO" id="GO:0016705">
    <property type="term" value="F:oxidoreductase activity, acting on paired donors, with incorporation or reduction of molecular oxygen"/>
    <property type="evidence" value="ECO:0007669"/>
    <property type="project" value="InterPro"/>
</dbReference>
<dbReference type="GO" id="GO:0046701">
    <property type="term" value="P:insecticide catabolic process"/>
    <property type="evidence" value="ECO:0000318"/>
    <property type="project" value="GO_Central"/>
</dbReference>
<dbReference type="GO" id="GO:0046680">
    <property type="term" value="P:response to DDT"/>
    <property type="evidence" value="ECO:0000318"/>
    <property type="project" value="GO_Central"/>
</dbReference>
<dbReference type="CDD" id="cd11056">
    <property type="entry name" value="CYP6-like"/>
    <property type="match status" value="1"/>
</dbReference>
<dbReference type="FunFam" id="1.10.630.10:FF:000205">
    <property type="entry name" value="Cyp6w1, isoform B"/>
    <property type="match status" value="1"/>
</dbReference>
<dbReference type="Gene3D" id="1.10.630.10">
    <property type="entry name" value="Cytochrome P450"/>
    <property type="match status" value="1"/>
</dbReference>
<dbReference type="InterPro" id="IPR001128">
    <property type="entry name" value="Cyt_P450"/>
</dbReference>
<dbReference type="InterPro" id="IPR017972">
    <property type="entry name" value="Cyt_P450_CS"/>
</dbReference>
<dbReference type="InterPro" id="IPR002401">
    <property type="entry name" value="Cyt_P450_E_grp-I"/>
</dbReference>
<dbReference type="InterPro" id="IPR036396">
    <property type="entry name" value="Cyt_P450_sf"/>
</dbReference>
<dbReference type="InterPro" id="IPR050476">
    <property type="entry name" value="Insect_CytP450_Detox"/>
</dbReference>
<dbReference type="PANTHER" id="PTHR24292">
    <property type="entry name" value="CYTOCHROME P450"/>
    <property type="match status" value="1"/>
</dbReference>
<dbReference type="PANTHER" id="PTHR24292:SF45">
    <property type="entry name" value="CYTOCHROME P450 6G1-RELATED"/>
    <property type="match status" value="1"/>
</dbReference>
<dbReference type="Pfam" id="PF00067">
    <property type="entry name" value="p450"/>
    <property type="match status" value="1"/>
</dbReference>
<dbReference type="PRINTS" id="PR00463">
    <property type="entry name" value="EP450I"/>
</dbReference>
<dbReference type="PRINTS" id="PR00385">
    <property type="entry name" value="P450"/>
</dbReference>
<dbReference type="SUPFAM" id="SSF48264">
    <property type="entry name" value="Cytochrome P450"/>
    <property type="match status" value="1"/>
</dbReference>
<dbReference type="PROSITE" id="PS00086">
    <property type="entry name" value="CYTOCHROME_P450"/>
    <property type="match status" value="1"/>
</dbReference>
<comment type="function">
    <text evidence="1">May be involved in the metabolism of insect hormones and in the breakdown of synthetic insecticides.</text>
</comment>
<comment type="cofactor">
    <cofactor evidence="1">
        <name>heme</name>
        <dbReference type="ChEBI" id="CHEBI:30413"/>
    </cofactor>
</comment>
<comment type="subcellular location">
    <subcellularLocation>
        <location evidence="2">Endoplasmic reticulum membrane</location>
        <topology evidence="2">Peripheral membrane protein</topology>
    </subcellularLocation>
    <subcellularLocation>
        <location evidence="2">Microsome membrane</location>
        <topology evidence="2">Peripheral membrane protein</topology>
    </subcellularLocation>
</comment>
<comment type="similarity">
    <text evidence="2">Belongs to the cytochrome P450 family.</text>
</comment>
<feature type="chain" id="PRO_0000051892" description="Probable cytochrome P450 6w1">
    <location>
        <begin position="1"/>
        <end position="514"/>
    </location>
</feature>
<feature type="binding site" description="axial binding residue" evidence="1">
    <location>
        <position position="450"/>
    </location>
    <ligand>
        <name>heme</name>
        <dbReference type="ChEBI" id="CHEBI:30413"/>
    </ligand>
    <ligandPart>
        <name>Fe</name>
        <dbReference type="ChEBI" id="CHEBI:18248"/>
    </ligandPart>
</feature>